<feature type="chain" id="PRO_0000101505" description="Ribosomal RNA small subunit methyltransferase A">
    <location>
        <begin position="1"/>
        <end position="266"/>
    </location>
</feature>
<feature type="binding site" evidence="1">
    <location>
        <position position="11"/>
    </location>
    <ligand>
        <name>S-adenosyl-L-methionine</name>
        <dbReference type="ChEBI" id="CHEBI:59789"/>
    </ligand>
</feature>
<feature type="binding site" evidence="1">
    <location>
        <position position="13"/>
    </location>
    <ligand>
        <name>S-adenosyl-L-methionine</name>
        <dbReference type="ChEBI" id="CHEBI:59789"/>
    </ligand>
</feature>
<feature type="binding site" evidence="1">
    <location>
        <position position="37"/>
    </location>
    <ligand>
        <name>S-adenosyl-L-methionine</name>
        <dbReference type="ChEBI" id="CHEBI:59789"/>
    </ligand>
</feature>
<feature type="binding site" evidence="1">
    <location>
        <position position="57"/>
    </location>
    <ligand>
        <name>S-adenosyl-L-methionine</name>
        <dbReference type="ChEBI" id="CHEBI:59789"/>
    </ligand>
</feature>
<feature type="binding site" evidence="1">
    <location>
        <position position="85"/>
    </location>
    <ligand>
        <name>S-adenosyl-L-methionine</name>
        <dbReference type="ChEBI" id="CHEBI:59789"/>
    </ligand>
</feature>
<feature type="binding site" evidence="1">
    <location>
        <position position="104"/>
    </location>
    <ligand>
        <name>S-adenosyl-L-methionine</name>
        <dbReference type="ChEBI" id="CHEBI:59789"/>
    </ligand>
</feature>
<sequence>MVKAKKQYGQNFLIDKSVLAKIIQAIPKEMNNIIEIGPGLGDLTQELLKISQVKAYEIDNDLIPILKKKFQKELECGKFNLIHQDASEAFNPSLDEKPYFLVANLPYYVASHIILKALEDKNCLGLIVMAQREMAEKFCAKEGNSEFSSLGVLSAMICERKILFDVDPQCFNPPPKVMSAVMSLIKTKDFDELCEIENFKNFLKDCFKAPRKQLLGNLKTYKAKVLEVLSTLGLKENIRPHEICVDLYLKIYDKLKDEYGRKQRDK</sequence>
<name>RSMA_CAMJE</name>
<gene>
    <name evidence="1" type="primary">rsmA</name>
    <name evidence="1" type="synonym">ksgA</name>
    <name type="ordered locus">Cj1711c</name>
</gene>
<proteinExistence type="inferred from homology"/>
<keyword id="KW-0963">Cytoplasm</keyword>
<keyword id="KW-0489">Methyltransferase</keyword>
<keyword id="KW-1185">Reference proteome</keyword>
<keyword id="KW-0694">RNA-binding</keyword>
<keyword id="KW-0698">rRNA processing</keyword>
<keyword id="KW-0949">S-adenosyl-L-methionine</keyword>
<keyword id="KW-0808">Transferase</keyword>
<evidence type="ECO:0000255" key="1">
    <source>
        <dbReference type="HAMAP-Rule" id="MF_00607"/>
    </source>
</evidence>
<protein>
    <recommendedName>
        <fullName evidence="1">Ribosomal RNA small subunit methyltransferase A</fullName>
        <ecNumber evidence="1">2.1.1.182</ecNumber>
    </recommendedName>
    <alternativeName>
        <fullName evidence="1">16S rRNA (adenine(1518)-N(6)/adenine(1519)-N(6))-dimethyltransferase</fullName>
    </alternativeName>
    <alternativeName>
        <fullName evidence="1">16S rRNA dimethyladenosine transferase</fullName>
    </alternativeName>
    <alternativeName>
        <fullName evidence="1">16S rRNA dimethylase</fullName>
    </alternativeName>
    <alternativeName>
        <fullName evidence="1">S-adenosylmethionine-6-N', N'-adenosyl(rRNA) dimethyltransferase</fullName>
    </alternativeName>
</protein>
<organism>
    <name type="scientific">Campylobacter jejuni subsp. jejuni serotype O:2 (strain ATCC 700819 / NCTC 11168)</name>
    <dbReference type="NCBI Taxonomy" id="192222"/>
    <lineage>
        <taxon>Bacteria</taxon>
        <taxon>Pseudomonadati</taxon>
        <taxon>Campylobacterota</taxon>
        <taxon>Epsilonproteobacteria</taxon>
        <taxon>Campylobacterales</taxon>
        <taxon>Campylobacteraceae</taxon>
        <taxon>Campylobacter</taxon>
    </lineage>
</organism>
<reference key="1">
    <citation type="journal article" date="2000" name="Nature">
        <title>The genome sequence of the food-borne pathogen Campylobacter jejuni reveals hypervariable sequences.</title>
        <authorList>
            <person name="Parkhill J."/>
            <person name="Wren B.W."/>
            <person name="Mungall K.L."/>
            <person name="Ketley J.M."/>
            <person name="Churcher C.M."/>
            <person name="Basham D."/>
            <person name="Chillingworth T."/>
            <person name="Davies R.M."/>
            <person name="Feltwell T."/>
            <person name="Holroyd S."/>
            <person name="Jagels K."/>
            <person name="Karlyshev A.V."/>
            <person name="Moule S."/>
            <person name="Pallen M.J."/>
            <person name="Penn C.W."/>
            <person name="Quail M.A."/>
            <person name="Rajandream M.A."/>
            <person name="Rutherford K.M."/>
            <person name="van Vliet A.H.M."/>
            <person name="Whitehead S."/>
            <person name="Barrell B.G."/>
        </authorList>
    </citation>
    <scope>NUCLEOTIDE SEQUENCE [LARGE SCALE GENOMIC DNA]</scope>
    <source>
        <strain>ATCC 700819 / NCTC 11168</strain>
    </source>
</reference>
<accession>Q9PLW7</accession>
<accession>Q0P7S0</accession>
<dbReference type="EC" id="2.1.1.182" evidence="1"/>
<dbReference type="EMBL" id="AL111168">
    <property type="protein sequence ID" value="CAL35805.1"/>
    <property type="molecule type" value="Genomic_DNA"/>
</dbReference>
<dbReference type="PIR" id="C81269">
    <property type="entry name" value="C81269"/>
</dbReference>
<dbReference type="RefSeq" id="WP_002853083.1">
    <property type="nucleotide sequence ID" value="NZ_SZUC01000002.1"/>
</dbReference>
<dbReference type="RefSeq" id="YP_002345077.1">
    <property type="nucleotide sequence ID" value="NC_002163.1"/>
</dbReference>
<dbReference type="SMR" id="Q9PLW7"/>
<dbReference type="IntAct" id="Q9PLW7">
    <property type="interactions" value="4"/>
</dbReference>
<dbReference type="STRING" id="192222.Cj1711c"/>
<dbReference type="PaxDb" id="192222-Cj1711c"/>
<dbReference type="EnsemblBacteria" id="CAL35805">
    <property type="protein sequence ID" value="CAL35805"/>
    <property type="gene ID" value="Cj1711c"/>
</dbReference>
<dbReference type="GeneID" id="905985"/>
<dbReference type="KEGG" id="cje:Cj1711c"/>
<dbReference type="PATRIC" id="fig|192222.6.peg.1685"/>
<dbReference type="eggNOG" id="COG0030">
    <property type="taxonomic scope" value="Bacteria"/>
</dbReference>
<dbReference type="HOGENOM" id="CLU_041220_0_2_7"/>
<dbReference type="OrthoDB" id="9814755at2"/>
<dbReference type="Proteomes" id="UP000000799">
    <property type="component" value="Chromosome"/>
</dbReference>
<dbReference type="GO" id="GO:0005829">
    <property type="term" value="C:cytosol"/>
    <property type="evidence" value="ECO:0007669"/>
    <property type="project" value="TreeGrafter"/>
</dbReference>
<dbReference type="GO" id="GO:0052908">
    <property type="term" value="F:16S rRNA (adenine(1518)-N(6)/adenine(1519)-N(6))-dimethyltransferase activity"/>
    <property type="evidence" value="ECO:0007669"/>
    <property type="project" value="UniProtKB-EC"/>
</dbReference>
<dbReference type="GO" id="GO:0003723">
    <property type="term" value="F:RNA binding"/>
    <property type="evidence" value="ECO:0007669"/>
    <property type="project" value="UniProtKB-KW"/>
</dbReference>
<dbReference type="CDD" id="cd02440">
    <property type="entry name" value="AdoMet_MTases"/>
    <property type="match status" value="1"/>
</dbReference>
<dbReference type="Gene3D" id="1.10.8.100">
    <property type="entry name" value="Ribosomal RNA adenine dimethylase-like, domain 2"/>
    <property type="match status" value="1"/>
</dbReference>
<dbReference type="Gene3D" id="3.40.50.150">
    <property type="entry name" value="Vaccinia Virus protein VP39"/>
    <property type="match status" value="1"/>
</dbReference>
<dbReference type="HAMAP" id="MF_00607">
    <property type="entry name" value="16SrRNA_methyltr_A"/>
    <property type="match status" value="1"/>
</dbReference>
<dbReference type="InterPro" id="IPR001737">
    <property type="entry name" value="KsgA/Erm"/>
</dbReference>
<dbReference type="InterPro" id="IPR023165">
    <property type="entry name" value="rRNA_Ade_diMease-like_C"/>
</dbReference>
<dbReference type="InterPro" id="IPR020596">
    <property type="entry name" value="rRNA_Ade_Mease_Trfase_CS"/>
</dbReference>
<dbReference type="InterPro" id="IPR020598">
    <property type="entry name" value="rRNA_Ade_methylase_Trfase_N"/>
</dbReference>
<dbReference type="InterPro" id="IPR011530">
    <property type="entry name" value="rRNA_adenine_dimethylase"/>
</dbReference>
<dbReference type="InterPro" id="IPR029063">
    <property type="entry name" value="SAM-dependent_MTases_sf"/>
</dbReference>
<dbReference type="NCBIfam" id="TIGR00755">
    <property type="entry name" value="ksgA"/>
    <property type="match status" value="1"/>
</dbReference>
<dbReference type="PANTHER" id="PTHR11727">
    <property type="entry name" value="DIMETHYLADENOSINE TRANSFERASE"/>
    <property type="match status" value="1"/>
</dbReference>
<dbReference type="PANTHER" id="PTHR11727:SF7">
    <property type="entry name" value="DIMETHYLADENOSINE TRANSFERASE-RELATED"/>
    <property type="match status" value="1"/>
</dbReference>
<dbReference type="Pfam" id="PF00398">
    <property type="entry name" value="RrnaAD"/>
    <property type="match status" value="1"/>
</dbReference>
<dbReference type="SMART" id="SM00650">
    <property type="entry name" value="rADc"/>
    <property type="match status" value="1"/>
</dbReference>
<dbReference type="SUPFAM" id="SSF53335">
    <property type="entry name" value="S-adenosyl-L-methionine-dependent methyltransferases"/>
    <property type="match status" value="1"/>
</dbReference>
<dbReference type="PROSITE" id="PS01131">
    <property type="entry name" value="RRNA_A_DIMETH"/>
    <property type="match status" value="1"/>
</dbReference>
<dbReference type="PROSITE" id="PS51689">
    <property type="entry name" value="SAM_RNA_A_N6_MT"/>
    <property type="match status" value="1"/>
</dbReference>
<comment type="function">
    <text evidence="1">Specifically dimethylates two adjacent adenosines (A1518 and A1519) in the loop of a conserved hairpin near the 3'-end of 16S rRNA in the 30S particle. May play a critical role in biogenesis of 30S subunits.</text>
</comment>
<comment type="catalytic activity">
    <reaction evidence="1">
        <text>adenosine(1518)/adenosine(1519) in 16S rRNA + 4 S-adenosyl-L-methionine = N(6)-dimethyladenosine(1518)/N(6)-dimethyladenosine(1519) in 16S rRNA + 4 S-adenosyl-L-homocysteine + 4 H(+)</text>
        <dbReference type="Rhea" id="RHEA:19609"/>
        <dbReference type="Rhea" id="RHEA-COMP:10232"/>
        <dbReference type="Rhea" id="RHEA-COMP:10233"/>
        <dbReference type="ChEBI" id="CHEBI:15378"/>
        <dbReference type="ChEBI" id="CHEBI:57856"/>
        <dbReference type="ChEBI" id="CHEBI:59789"/>
        <dbReference type="ChEBI" id="CHEBI:74411"/>
        <dbReference type="ChEBI" id="CHEBI:74493"/>
        <dbReference type="EC" id="2.1.1.182"/>
    </reaction>
</comment>
<comment type="subcellular location">
    <subcellularLocation>
        <location evidence="1">Cytoplasm</location>
    </subcellularLocation>
</comment>
<comment type="similarity">
    <text evidence="1">Belongs to the class I-like SAM-binding methyltransferase superfamily. rRNA adenine N(6)-methyltransferase family. RsmA subfamily.</text>
</comment>